<evidence type="ECO:0000250" key="1">
    <source>
        <dbReference type="UniProtKB" id="Q60952"/>
    </source>
</evidence>
<evidence type="ECO:0000255" key="2"/>
<evidence type="ECO:0000256" key="3">
    <source>
        <dbReference type="SAM" id="MobiDB-lite"/>
    </source>
</evidence>
<evidence type="ECO:0000269" key="4">
    <source>
    </source>
</evidence>
<evidence type="ECO:0000269" key="5">
    <source>
    </source>
</evidence>
<evidence type="ECO:0000269" key="6">
    <source>
    </source>
</evidence>
<evidence type="ECO:0000269" key="7">
    <source>
    </source>
</evidence>
<evidence type="ECO:0000269" key="8">
    <source>
    </source>
</evidence>
<evidence type="ECO:0000269" key="9">
    <source>
    </source>
</evidence>
<evidence type="ECO:0000269" key="10">
    <source>
    </source>
</evidence>
<evidence type="ECO:0000269" key="11">
    <source>
    </source>
</evidence>
<evidence type="ECO:0000269" key="12">
    <source>
    </source>
</evidence>
<evidence type="ECO:0000269" key="13">
    <source>
    </source>
</evidence>
<evidence type="ECO:0000269" key="14">
    <source>
    </source>
</evidence>
<evidence type="ECO:0000269" key="15">
    <source>
    </source>
</evidence>
<evidence type="ECO:0000269" key="16">
    <source>
    </source>
</evidence>
<evidence type="ECO:0000269" key="17">
    <source>
    </source>
</evidence>
<evidence type="ECO:0000269" key="18">
    <source>
    </source>
</evidence>
<evidence type="ECO:0000269" key="19">
    <source>
    </source>
</evidence>
<evidence type="ECO:0000303" key="20">
    <source>
    </source>
</evidence>
<evidence type="ECO:0000305" key="21"/>
<evidence type="ECO:0007744" key="22">
    <source>
    </source>
</evidence>
<evidence type="ECO:0007744" key="23">
    <source>
    </source>
</evidence>
<evidence type="ECO:0007829" key="24">
    <source>
        <dbReference type="PDB" id="6OQA"/>
    </source>
</evidence>
<keyword id="KW-0002">3D-structure</keyword>
<keyword id="KW-0025">Alternative splicing</keyword>
<keyword id="KW-0131">Cell cycle</keyword>
<keyword id="KW-0966">Cell projection</keyword>
<keyword id="KW-0969">Cilium</keyword>
<keyword id="KW-0970">Cilium biogenesis/degradation</keyword>
<keyword id="KW-0175">Coiled coil</keyword>
<keyword id="KW-0182">Cone-rod dystrophy</keyword>
<keyword id="KW-0963">Cytoplasm</keyword>
<keyword id="KW-0206">Cytoskeleton</keyword>
<keyword id="KW-0209">Deafness</keyword>
<keyword id="KW-0225">Disease variant</keyword>
<keyword id="KW-0597">Phosphoprotein</keyword>
<keyword id="KW-1267">Proteomics identification</keyword>
<keyword id="KW-1185">Reference proteome</keyword>
<dbReference type="EMBL" id="AF022655">
    <property type="protein sequence ID" value="AAC06349.1"/>
    <property type="molecule type" value="mRNA"/>
</dbReference>
<dbReference type="EMBL" id="AF049105">
    <property type="protein sequence ID" value="AAC07988.1"/>
    <property type="molecule type" value="mRNA"/>
</dbReference>
<dbReference type="EMBL" id="AL121586">
    <property type="protein sequence ID" value="CAB89415.1"/>
    <property type="molecule type" value="Genomic_DNA"/>
</dbReference>
<dbReference type="EMBL" id="CH471077">
    <property type="protein sequence ID" value="EAW76206.1"/>
    <property type="molecule type" value="Genomic_DNA"/>
</dbReference>
<dbReference type="EMBL" id="CH471077">
    <property type="protein sequence ID" value="EAW76207.1"/>
    <property type="molecule type" value="Genomic_DNA"/>
</dbReference>
<dbReference type="CCDS" id="CCDS13255.1">
    <molecule id="Q9BV73-1"/>
</dbReference>
<dbReference type="PIR" id="T08621">
    <property type="entry name" value="T08621"/>
</dbReference>
<dbReference type="RefSeq" id="NP_001305148.1">
    <property type="nucleotide sequence ID" value="NM_001318219.1"/>
</dbReference>
<dbReference type="RefSeq" id="NP_009117.2">
    <molecule id="Q9BV73-1"/>
    <property type="nucleotide sequence ID" value="NM_007186.5"/>
</dbReference>
<dbReference type="RefSeq" id="XP_005260319.1">
    <molecule id="Q9BV73-1"/>
    <property type="nucleotide sequence ID" value="XM_005260262.5"/>
</dbReference>
<dbReference type="RefSeq" id="XP_006723753.1">
    <molecule id="Q9BV73-1"/>
    <property type="nucleotide sequence ID" value="XM_006723690.5"/>
</dbReference>
<dbReference type="RefSeq" id="XP_006723754.1">
    <molecule id="Q9BV73-1"/>
    <property type="nucleotide sequence ID" value="XM_006723691.2"/>
</dbReference>
<dbReference type="RefSeq" id="XP_006723755.1">
    <molecule id="Q9BV73-1"/>
    <property type="nucleotide sequence ID" value="XM_006723692.5"/>
</dbReference>
<dbReference type="RefSeq" id="XP_006723756.1">
    <molecule id="Q9BV73-1"/>
    <property type="nucleotide sequence ID" value="XM_006723693.5"/>
</dbReference>
<dbReference type="RefSeq" id="XP_054178862.1">
    <molecule id="Q9BV73-1"/>
    <property type="nucleotide sequence ID" value="XM_054322887.1"/>
</dbReference>
<dbReference type="RefSeq" id="XP_054178863.1">
    <molecule id="Q9BV73-1"/>
    <property type="nucleotide sequence ID" value="XM_054322888.1"/>
</dbReference>
<dbReference type="RefSeq" id="XP_054178864.1">
    <molecule id="Q9BV73-1"/>
    <property type="nucleotide sequence ID" value="XM_054322889.1"/>
</dbReference>
<dbReference type="RefSeq" id="XP_054178865.1">
    <molecule id="Q9BV73-1"/>
    <property type="nucleotide sequence ID" value="XM_054322890.1"/>
</dbReference>
<dbReference type="RefSeq" id="XP_054178866.1">
    <molecule id="Q9BV73-1"/>
    <property type="nucleotide sequence ID" value="XM_054322891.1"/>
</dbReference>
<dbReference type="PDB" id="6OQA">
    <property type="method" value="X-ray"/>
    <property type="resolution" value="2.20 A"/>
    <property type="chains" value="C/D/G/H=2134-2231"/>
</dbReference>
<dbReference type="PDBsum" id="6OQA"/>
<dbReference type="SMR" id="Q9BV73"/>
<dbReference type="BioGRID" id="116360">
    <property type="interactions" value="290"/>
</dbReference>
<dbReference type="DIP" id="DIP-39406N"/>
<dbReference type="FunCoup" id="Q9BV73">
    <property type="interactions" value="1070"/>
</dbReference>
<dbReference type="IntAct" id="Q9BV73">
    <property type="interactions" value="58"/>
</dbReference>
<dbReference type="MINT" id="Q9BV73"/>
<dbReference type="STRING" id="9606.ENSP00000380661"/>
<dbReference type="GlyGen" id="Q9BV73">
    <property type="glycosylation" value="1 site, 1 O-linked glycan (1 site)"/>
</dbReference>
<dbReference type="iPTMnet" id="Q9BV73"/>
<dbReference type="PhosphoSitePlus" id="Q9BV73"/>
<dbReference type="BioMuta" id="CEP250"/>
<dbReference type="DMDM" id="30580364"/>
<dbReference type="jPOST" id="Q9BV73"/>
<dbReference type="MassIVE" id="Q9BV73"/>
<dbReference type="PaxDb" id="9606-ENSP00000380661"/>
<dbReference type="PeptideAtlas" id="Q9BV73"/>
<dbReference type="ProteomicsDB" id="79175">
    <molecule id="Q9BV73-1"/>
</dbReference>
<dbReference type="ProteomicsDB" id="79176">
    <molecule id="Q9BV73-2"/>
</dbReference>
<dbReference type="Pumba" id="Q9BV73"/>
<dbReference type="Antibodypedia" id="26072">
    <property type="antibodies" value="88 antibodies from 20 providers"/>
</dbReference>
<dbReference type="DNASU" id="11190"/>
<dbReference type="Ensembl" id="ENST00000397527.6">
    <molecule id="Q9BV73-1"/>
    <property type="protein sequence ID" value="ENSP00000380661.1"/>
    <property type="gene ID" value="ENSG00000126001.17"/>
</dbReference>
<dbReference type="GeneID" id="11190"/>
<dbReference type="KEGG" id="hsa:11190"/>
<dbReference type="MANE-Select" id="ENST00000397527.6">
    <property type="protein sequence ID" value="ENSP00000380661.1"/>
    <property type="RefSeq nucleotide sequence ID" value="NM_007186.6"/>
    <property type="RefSeq protein sequence ID" value="NP_009117.2"/>
</dbReference>
<dbReference type="UCSC" id="uc032pib.2">
    <molecule id="Q9BV73-1"/>
    <property type="organism name" value="human"/>
</dbReference>
<dbReference type="AGR" id="HGNC:1859"/>
<dbReference type="CTD" id="11190"/>
<dbReference type="DisGeNET" id="11190"/>
<dbReference type="GeneCards" id="CEP250"/>
<dbReference type="HGNC" id="HGNC:1859">
    <property type="gene designation" value="CEP250"/>
</dbReference>
<dbReference type="HPA" id="ENSG00000126001">
    <property type="expression patterns" value="Low tissue specificity"/>
</dbReference>
<dbReference type="MalaCards" id="CEP250"/>
<dbReference type="MIM" id="609689">
    <property type="type" value="gene"/>
</dbReference>
<dbReference type="MIM" id="618358">
    <property type="type" value="phenotype"/>
</dbReference>
<dbReference type="neXtProt" id="NX_Q9BV73"/>
<dbReference type="OpenTargets" id="ENSG00000126001"/>
<dbReference type="PharmGKB" id="PA26415"/>
<dbReference type="VEuPathDB" id="HostDB:ENSG00000126001"/>
<dbReference type="eggNOG" id="ENOG502QTBY">
    <property type="taxonomic scope" value="Eukaryota"/>
</dbReference>
<dbReference type="GeneTree" id="ENSGT00940000161056"/>
<dbReference type="HOGENOM" id="CLU_000920_0_0_1"/>
<dbReference type="InParanoid" id="Q9BV73"/>
<dbReference type="OMA" id="DQDLRHQ"/>
<dbReference type="OrthoDB" id="3549872at2759"/>
<dbReference type="PAN-GO" id="Q9BV73">
    <property type="GO annotations" value="3 GO annotations based on evolutionary models"/>
</dbReference>
<dbReference type="PhylomeDB" id="Q9BV73"/>
<dbReference type="TreeFam" id="TF101138"/>
<dbReference type="PathwayCommons" id="Q9BV73"/>
<dbReference type="Reactome" id="R-HSA-2565942">
    <property type="pathway name" value="Regulation of PLK1 Activity at G2/M Transition"/>
</dbReference>
<dbReference type="Reactome" id="R-HSA-380259">
    <property type="pathway name" value="Loss of Nlp from mitotic centrosomes"/>
</dbReference>
<dbReference type="Reactome" id="R-HSA-380270">
    <property type="pathway name" value="Recruitment of mitotic centrosome proteins and complexes"/>
</dbReference>
<dbReference type="Reactome" id="R-HSA-380284">
    <property type="pathway name" value="Loss of proteins required for interphase microtubule organization from the centrosome"/>
</dbReference>
<dbReference type="Reactome" id="R-HSA-380320">
    <property type="pathway name" value="Recruitment of NuMA to mitotic centrosomes"/>
</dbReference>
<dbReference type="Reactome" id="R-HSA-5620912">
    <property type="pathway name" value="Anchoring of the basal body to the plasma membrane"/>
</dbReference>
<dbReference type="Reactome" id="R-HSA-8854518">
    <property type="pathway name" value="AURKA Activation by TPX2"/>
</dbReference>
<dbReference type="SignaLink" id="Q9BV73"/>
<dbReference type="SIGNOR" id="Q9BV73"/>
<dbReference type="BioGRID-ORCS" id="11190">
    <property type="hits" value="20 hits in 1169 CRISPR screens"/>
</dbReference>
<dbReference type="CD-CODE" id="8C2F96ED">
    <property type="entry name" value="Centrosome"/>
</dbReference>
<dbReference type="CD-CODE" id="91857CE7">
    <property type="entry name" value="Nucleolus"/>
</dbReference>
<dbReference type="ChiTaRS" id="CEP250">
    <property type="organism name" value="human"/>
</dbReference>
<dbReference type="GeneWiki" id="CEP250"/>
<dbReference type="GenomeRNAi" id="11190"/>
<dbReference type="Pharos" id="Q9BV73">
    <property type="development level" value="Tbio"/>
</dbReference>
<dbReference type="PRO" id="PR:Q9BV73"/>
<dbReference type="Proteomes" id="UP000005640">
    <property type="component" value="Chromosome 20"/>
</dbReference>
<dbReference type="RNAct" id="Q9BV73">
    <property type="molecule type" value="protein"/>
</dbReference>
<dbReference type="Bgee" id="ENSG00000126001">
    <property type="expression patterns" value="Expressed in sural nerve and 117 other cell types or tissues"/>
</dbReference>
<dbReference type="ExpressionAtlas" id="Q9BV73">
    <property type="expression patterns" value="baseline and differential"/>
</dbReference>
<dbReference type="GO" id="GO:0005814">
    <property type="term" value="C:centriole"/>
    <property type="evidence" value="ECO:0000314"/>
    <property type="project" value="UniProtKB"/>
</dbReference>
<dbReference type="GO" id="GO:0005813">
    <property type="term" value="C:centrosome"/>
    <property type="evidence" value="ECO:0000314"/>
    <property type="project" value="HPA"/>
</dbReference>
<dbReference type="GO" id="GO:0036064">
    <property type="term" value="C:ciliary basal body"/>
    <property type="evidence" value="ECO:0000314"/>
    <property type="project" value="HPA"/>
</dbReference>
<dbReference type="GO" id="GO:0005829">
    <property type="term" value="C:cytosol"/>
    <property type="evidence" value="ECO:0000304"/>
    <property type="project" value="Reactome"/>
</dbReference>
<dbReference type="GO" id="GO:0070062">
    <property type="term" value="C:extracellular exosome"/>
    <property type="evidence" value="ECO:0007005"/>
    <property type="project" value="UniProtKB"/>
</dbReference>
<dbReference type="GO" id="GO:0005815">
    <property type="term" value="C:microtubule organizing center"/>
    <property type="evidence" value="ECO:0000303"/>
    <property type="project" value="UniProtKB"/>
</dbReference>
<dbReference type="GO" id="GO:0048471">
    <property type="term" value="C:perinuclear region of cytoplasm"/>
    <property type="evidence" value="ECO:0007669"/>
    <property type="project" value="UniProtKB-SubCell"/>
</dbReference>
<dbReference type="GO" id="GO:0001917">
    <property type="term" value="C:photoreceptor inner segment"/>
    <property type="evidence" value="ECO:0000250"/>
    <property type="project" value="UniProtKB"/>
</dbReference>
<dbReference type="GO" id="GO:0001750">
    <property type="term" value="C:photoreceptor outer segment"/>
    <property type="evidence" value="ECO:0000250"/>
    <property type="project" value="UniProtKB"/>
</dbReference>
<dbReference type="GO" id="GO:0032991">
    <property type="term" value="C:protein-containing complex"/>
    <property type="evidence" value="ECO:0000315"/>
    <property type="project" value="UniProtKB"/>
</dbReference>
<dbReference type="GO" id="GO:0031616">
    <property type="term" value="C:spindle pole centrosome"/>
    <property type="evidence" value="ECO:0007669"/>
    <property type="project" value="Ensembl"/>
</dbReference>
<dbReference type="GO" id="GO:0019904">
    <property type="term" value="F:protein domain specific binding"/>
    <property type="evidence" value="ECO:0000353"/>
    <property type="project" value="UniProtKB"/>
</dbReference>
<dbReference type="GO" id="GO:0010457">
    <property type="term" value="P:centriole-centriole cohesion"/>
    <property type="evidence" value="ECO:0000314"/>
    <property type="project" value="UniProtKB"/>
</dbReference>
<dbReference type="GO" id="GO:0060271">
    <property type="term" value="P:cilium assembly"/>
    <property type="evidence" value="ECO:0000315"/>
    <property type="project" value="UniProtKB"/>
</dbReference>
<dbReference type="GO" id="GO:0050908">
    <property type="term" value="P:detection of light stimulus involved in visual perception"/>
    <property type="evidence" value="ECO:0000250"/>
    <property type="project" value="UniProtKB"/>
</dbReference>
<dbReference type="GO" id="GO:0000278">
    <property type="term" value="P:mitotic cell cycle"/>
    <property type="evidence" value="ECO:0000314"/>
    <property type="project" value="UniProtKB"/>
</dbReference>
<dbReference type="GO" id="GO:1905515">
    <property type="term" value="P:non-motile cilium assembly"/>
    <property type="evidence" value="ECO:0000315"/>
    <property type="project" value="GO_Central"/>
</dbReference>
<dbReference type="GO" id="GO:1904781">
    <property type="term" value="P:positive regulation of protein localization to centrosome"/>
    <property type="evidence" value="ECO:0000315"/>
    <property type="project" value="UniProtKB"/>
</dbReference>
<dbReference type="GO" id="GO:0008104">
    <property type="term" value="P:protein localization"/>
    <property type="evidence" value="ECO:0000315"/>
    <property type="project" value="UniProtKB"/>
</dbReference>
<dbReference type="GO" id="GO:0071539">
    <property type="term" value="P:protein localization to centrosome"/>
    <property type="evidence" value="ECO:0000315"/>
    <property type="project" value="UniProtKB"/>
</dbReference>
<dbReference type="GO" id="GO:0033365">
    <property type="term" value="P:protein localization to organelle"/>
    <property type="evidence" value="ECO:0000315"/>
    <property type="project" value="UniProtKB"/>
</dbReference>
<dbReference type="GO" id="GO:0030997">
    <property type="term" value="P:regulation of centriole-centriole cohesion"/>
    <property type="evidence" value="ECO:0000314"/>
    <property type="project" value="UniProtKB"/>
</dbReference>
<dbReference type="InterPro" id="IPR055167">
    <property type="entry name" value="Rootletin-like_CC"/>
</dbReference>
<dbReference type="PANTHER" id="PTHR23159">
    <property type="entry name" value="CENTROSOMAL PROTEIN 2"/>
    <property type="match status" value="1"/>
</dbReference>
<dbReference type="PANTHER" id="PTHR23159:SF1">
    <property type="entry name" value="CENTROSOME-ASSOCIATED PROTEIN CEP250"/>
    <property type="match status" value="1"/>
</dbReference>
<dbReference type="Pfam" id="PF15035">
    <property type="entry name" value="Rootletin"/>
    <property type="match status" value="1"/>
</dbReference>
<proteinExistence type="evidence at protein level"/>
<feature type="chain" id="PRO_0000089487" description="Centrosome-associated protein CEP250">
    <location>
        <begin position="1"/>
        <end position="2442"/>
    </location>
</feature>
<feature type="region of interest" description="Disordered" evidence="3">
    <location>
        <begin position="1273"/>
        <end position="1308"/>
    </location>
</feature>
<feature type="region of interest" description="Disordered" evidence="3">
    <location>
        <begin position="1699"/>
        <end position="1725"/>
    </location>
</feature>
<feature type="region of interest" description="Disordered" evidence="3">
    <location>
        <begin position="1820"/>
        <end position="1839"/>
    </location>
</feature>
<feature type="region of interest" description="Disordered" evidence="3">
    <location>
        <begin position="2223"/>
        <end position="2244"/>
    </location>
</feature>
<feature type="region of interest" description="Disordered" evidence="3">
    <location>
        <begin position="2307"/>
        <end position="2345"/>
    </location>
</feature>
<feature type="region of interest" description="Disordered" evidence="3">
    <location>
        <begin position="2416"/>
        <end position="2442"/>
    </location>
</feature>
<feature type="coiled-coil region" evidence="2">
    <location>
        <begin position="95"/>
        <end position="158"/>
    </location>
</feature>
<feature type="coiled-coil region" evidence="2">
    <location>
        <begin position="244"/>
        <end position="352"/>
    </location>
</feature>
<feature type="coiled-coil region" evidence="2">
    <location>
        <begin position="395"/>
        <end position="1172"/>
    </location>
</feature>
<feature type="coiled-coil region" evidence="2">
    <location>
        <begin position="1243"/>
        <end position="2227"/>
    </location>
</feature>
<feature type="coiled-coil region" evidence="2">
    <location>
        <begin position="2262"/>
        <end position="2376"/>
    </location>
</feature>
<feature type="compositionally biased region" description="Basic and acidic residues" evidence="3">
    <location>
        <begin position="1273"/>
        <end position="1289"/>
    </location>
</feature>
<feature type="compositionally biased region" description="Basic and acidic residues" evidence="3">
    <location>
        <begin position="1699"/>
        <end position="1715"/>
    </location>
</feature>
<feature type="compositionally biased region" description="Low complexity" evidence="3">
    <location>
        <begin position="1820"/>
        <end position="1831"/>
    </location>
</feature>
<feature type="compositionally biased region" description="Polar residues" evidence="3">
    <location>
        <begin position="2328"/>
        <end position="2338"/>
    </location>
</feature>
<feature type="compositionally biased region" description="Polar residues" evidence="3">
    <location>
        <begin position="2433"/>
        <end position="2442"/>
    </location>
</feature>
<feature type="modified residue" description="Phosphoserine" evidence="23">
    <location>
        <position position="2138"/>
    </location>
</feature>
<feature type="modified residue" description="Phosphothreonine" evidence="23">
    <location>
        <position position="2218"/>
    </location>
</feature>
<feature type="modified residue" description="Phosphoserine" evidence="22 23">
    <location>
        <position position="2229"/>
    </location>
</feature>
<feature type="modified residue" description="Phosphoserine" evidence="22">
    <location>
        <position position="2252"/>
    </location>
</feature>
<feature type="modified residue" description="Phosphoserine" evidence="23">
    <location>
        <position position="2322"/>
    </location>
</feature>
<feature type="modified residue" description="Phosphoserine; by NEK2" evidence="8">
    <location>
        <position position="2417"/>
    </location>
</feature>
<feature type="modified residue" description="Phosphoserine; by NEK2" evidence="8">
    <location>
        <position position="2421"/>
    </location>
</feature>
<feature type="splice variant" id="VSP_007372" description="In isoform 2." evidence="20">
    <location>
        <begin position="863"/>
        <end position="918"/>
    </location>
</feature>
<feature type="sequence variant" id="VAR_081745" description="In CRDHL2." evidence="13">
    <location>
        <begin position="121"/>
        <end position="2442"/>
    </location>
</feature>
<feature type="sequence variant" id="VAR_081746" description="In CRDHL2; also found in a family with non-syndromic retinitis pigmentosa." evidence="13 16">
    <location>
        <begin position="188"/>
        <end position="2442"/>
    </location>
</feature>
<feature type="sequence variant" id="VAR_081747" description="Found in autosomal recessive retinitis pigmentosa; uncertain significance; results in increased ciliary length; dbSNP:rs145878385." evidence="12">
    <original>A</original>
    <variation>V</variation>
    <location>
        <position position="609"/>
    </location>
</feature>
<feature type="sequence variant" id="VAR_015649" description="In dbSNP:rs2296403.">
    <original>Q</original>
    <variation>H</variation>
    <location>
        <position position="995"/>
    </location>
</feature>
<feature type="sequence variant" id="VAR_050898" description="In dbSNP:rs17092706.">
    <original>Q</original>
    <variation>E</variation>
    <location>
        <position position="1072"/>
    </location>
</feature>
<feature type="sequence variant" id="VAR_081748" description="In CRDHL2." evidence="15">
    <location>
        <begin position="1113"/>
        <end position="2442"/>
    </location>
</feature>
<feature type="sequence variant" id="VAR_081749" description="In CRDHL2; the retinal involvement is more severe in double homozygotes also carrying a PCARE truncating variant." evidence="10">
    <location>
        <begin position="1155"/>
        <end position="2442"/>
    </location>
</feature>
<feature type="sequence variant" id="VAR_081750" description="In CRDHL2." evidence="15">
    <location>
        <begin position="1336"/>
        <end position="2442"/>
    </location>
</feature>
<feature type="sequence variant" id="VAR_021858" description="In dbSNP:rs3748433.">
    <original>R</original>
    <variation>Q</variation>
    <location>
        <position position="1441"/>
    </location>
</feature>
<feature type="sequence conflict" description="In Ref. 1; AAC06349." evidence="21" ref="1">
    <original>L</original>
    <variation>I</variation>
    <location>
        <position position="120"/>
    </location>
</feature>
<feature type="sequence conflict" description="In Ref. 1; AAC06349." evidence="21" ref="1">
    <original>E</original>
    <variation>A</variation>
    <location>
        <position position="136"/>
    </location>
</feature>
<feature type="sequence conflict" description="In Ref. 1; AAC06349." evidence="21" ref="1">
    <original>H</original>
    <variation>L</variation>
    <location>
        <position position="365"/>
    </location>
</feature>
<feature type="sequence conflict" description="In Ref. 1; AAC06349." evidence="21" ref="1">
    <original>D</original>
    <variation>E</variation>
    <location>
        <position position="372"/>
    </location>
</feature>
<feature type="sequence conflict" description="In Ref. 2; AAC07988." evidence="21" ref="2">
    <original>E</original>
    <variation>D</variation>
    <location>
        <position position="509"/>
    </location>
</feature>
<feature type="sequence conflict" description="In Ref. 1; AAC06349." evidence="21" ref="1">
    <original>S</original>
    <variation>I</variation>
    <location>
        <position position="552"/>
    </location>
</feature>
<feature type="sequence conflict" description="In Ref. 1; AAC06349." evidence="21" ref="1">
    <original>E</original>
    <variation>A</variation>
    <location>
        <position position="757"/>
    </location>
</feature>
<feature type="sequence conflict" description="In Ref. 1; AAC06349." evidence="21" ref="1">
    <original>EVTK</original>
    <variation>DEPQ</variation>
    <location>
        <begin position="784"/>
        <end position="787"/>
    </location>
</feature>
<feature type="sequence conflict" description="In Ref. 1; AAC06349." evidence="21" ref="1">
    <original>Q</original>
    <variation>H</variation>
    <location>
        <position position="1153"/>
    </location>
</feature>
<feature type="sequence conflict" description="In Ref. 1; AAC06349." evidence="21" ref="1">
    <original>H</original>
    <variation>L</variation>
    <location>
        <position position="1246"/>
    </location>
</feature>
<feature type="sequence conflict" description="In Ref. 1; AAC06349." evidence="21" ref="1">
    <original>L</original>
    <variation>P</variation>
    <location>
        <position position="1513"/>
    </location>
</feature>
<feature type="sequence conflict" description="In Ref. 1; AAC06349." evidence="21" ref="1">
    <original>Q</original>
    <variation>L</variation>
    <location>
        <position position="2082"/>
    </location>
</feature>
<feature type="sequence conflict" description="In Ref. 1; AAC06349." evidence="21" ref="1">
    <original>D</original>
    <variation>N</variation>
    <location>
        <position position="2345"/>
    </location>
</feature>
<feature type="helix" evidence="24">
    <location>
        <begin position="2148"/>
        <end position="2227"/>
    </location>
</feature>
<gene>
    <name type="primary">CEP250</name>
    <name type="synonym">CEP2</name>
    <name type="synonym">CNAP1</name>
</gene>
<comment type="function">
    <text evidence="12 14 18">Plays an important role in centrosome cohesion during interphase (PubMed:30404835, PubMed:36282799). Recruits CCDC102B to the proximal ends of centrioles (PubMed:30404835). Maintains centrosome cohesion by forming intercentriolar linkages (PubMed:36282799). Accumulates at the proximal end of each centriole, forming supramolecular assemblies with viscous material properties that promote organelle cohesion (PubMed:36282799). May be involved in ciliogenesis (PubMed:28005958).</text>
</comment>
<comment type="subunit">
    <text evidence="1 4 7 9 14 19 21">Monomer and homodimer (Probable). Forms a complex in vitro with both NEK2 kinase and the PPP1CC catalytic subunit of protein phosphatase 1 (PP1) (PubMed:10880350, PubMed:9647649). Interacts with CEP135 (PubMed:18851962). Interacts with CROCC/rootletin (By similarity). Interacts with CNTLN (PubMed:24554434). Interacts with NIN (via C-terminus) (By similarity). Interacts with CCDC102B (via N-terminus); the interaction results in recruitment of CCDC102B to the proximal ends of centrioles (PubMed:30404835).</text>
</comment>
<comment type="interaction">
    <interactant intactId="EBI-1053100">
        <id>Q9BV73</id>
    </interactant>
    <interactant intactId="EBI-748974">
        <id>Q96CV9</id>
        <label>OPTN</label>
    </interactant>
    <organismsDiffer>false</organismsDiffer>
    <experiments>3</experiments>
</comment>
<comment type="interaction">
    <interactant intactId="EBI-1053100">
        <id>Q9BV73</id>
    </interactant>
    <interactant intactId="EBI-1181664">
        <id>Q9H0K1</id>
        <label>SIK2</label>
    </interactant>
    <organismsDiffer>false</organismsDiffer>
    <experiments>5</experiments>
</comment>
<comment type="interaction">
    <interactant intactId="EBI-1053100">
        <id>Q9BV73</id>
    </interactant>
    <interactant intactId="EBI-7690990">
        <id>O88566</id>
        <label>Axin2</label>
    </interactant>
    <organismsDiffer>true</organismsDiffer>
    <experiments>3</experiments>
</comment>
<comment type="interaction">
    <interactant intactId="EBI-1053100">
        <id>Q9BV73</id>
    </interactant>
    <interactant intactId="EBI-25475920">
        <id>PRO_0000449631</id>
        <label>rep</label>
        <dbReference type="UniProtKB" id="P0DTD1"/>
    </interactant>
    <organismsDiffer>true</organismsDiffer>
    <experiments>3</experiments>
</comment>
<comment type="subcellular location">
    <subcellularLocation>
        <location evidence="19">Cytoplasm</location>
        <location evidence="19">Perinuclear region</location>
    </subcellularLocation>
    <subcellularLocation>
        <location evidence="11 14 18 19">Cytoplasm</location>
        <location evidence="11 14 18 19">Cytoskeleton</location>
        <location evidence="11 14 18 19">Microtubule organizing center</location>
        <location evidence="11 14 18 19">Centrosome</location>
        <location evidence="11 14 18 19">Centriole</location>
    </subcellularLocation>
    <subcellularLocation>
        <location evidence="6 17">Cytoplasm</location>
        <location evidence="6 17">Cytoskeleton</location>
        <location evidence="6 17">Microtubule organizing center</location>
        <location evidence="6 17">Centrosome</location>
    </subcellularLocation>
    <subcellularLocation>
        <location evidence="19">Cytoplasm</location>
        <location evidence="19">Cytoskeleton</location>
        <location evidence="19">Cilium basal body</location>
    </subcellularLocation>
    <subcellularLocation>
        <location evidence="1">Cell projection</location>
        <location evidence="1">Cilium</location>
        <location evidence="1">Photoreceptor outer segment</location>
    </subcellularLocation>
    <subcellularLocation>
        <location evidence="1">Photoreceptor inner segment</location>
    </subcellularLocation>
    <text>Component of the core centrosome. In interphase cells, it specifically associates with the proximal ends of both mother and daughter centrioles. Associates with the centrosome in interphase cells. In mitotic cells, it dissociates from the mitotic spindle poles. At the end of cell division, it reaccumulates at centrosomes.</text>
</comment>
<comment type="alternative products">
    <event type="alternative splicing"/>
    <isoform>
        <id>Q9BV73-1</id>
        <name>1</name>
        <sequence type="displayed"/>
    </isoform>
    <isoform>
        <id>Q9BV73-2</id>
        <name>2</name>
        <sequence type="described" ref="VSP_007372"/>
    </isoform>
</comment>
<comment type="tissue specificity">
    <text>Ubiquitously and weakly expressed.</text>
</comment>
<comment type="PTM">
    <text evidence="4 5 8">Differentially phosphorylated during cell cycle. Phosphorylation may regulate association/dissociation from centrosome. During M phase of mitosis, C-terminal part is phosphorylated by NEK2, suggesting that it may trigger the dissociation from the mitotic centrosome. Dephosphorylated in vitro by the PP1 phosphatase.</text>
</comment>
<comment type="disease" evidence="10 13 15 16">
    <disease id="DI-05510">
        <name>Cone-rod dystrophy and hearing loss 2</name>
        <acronym>CRDHL2</acronym>
        <description>An autosomal recessive disease defined by the association of progressive cone-rod dystrophy with sensorineural hearing loss. Cone-rod dystrophy is characterized by retinal pigment deposits visible on fundus examination, predominantly in the macular region, and initial loss of cone photoreceptors followed by rod degeneration. This leads to decreased visual acuity and sensitivity in the central visual field, followed by loss of peripheral vision. Severe loss of vision occurs earlier than in retinitis pigmentosa, due to cone photoreceptors degenerating at a higher rate than rod photoreceptors.</description>
        <dbReference type="MIM" id="618358"/>
    </disease>
    <text>The disease is caused by variants affecting the gene represented in this entry.</text>
</comment>
<comment type="miscellaneous">
    <text>Antibodies against CEP2 are present in sera from patients with autoimmune diseases that developed autoantibodies against centrosomal proteins.</text>
</comment>
<sequence length="2442" mass="281137">METRSPGLNNMKPQSLQLVLEEQVLALQQQMAENQAASWRKLKNSQEAQQRQATLVRKLQAKVLQYRSWCQELEKRLEATGGPIPQRWENVEEPNLDELLVRLEEEQQRCESLAEVNTQLRLHMEKADVVNKALREDVEKLTVDWSRARDELMRKESQWQMEQEFFKGYLKGEHGRLLSLWREVVTFRRHFLEMKSATDRDLMELKAEHVRLSGSLLTCCLRLTVGAQSREPNGSGRMDGREPAQLLLLLAKTQELEKEAHERSQELIQLKSQGDLEKAELQDRVTELSALLTQSQKQNEDYEKMIKALRETVEILETNHTELMEHEASLSRNAQEEKLSLQQVIKDITQVMVEEGDNIAQGSGHENSLELDSSIFSQFDYQDADKALTLVRSVLTRRRQAVQDLRQQLAGCQEAVNLLQQQHDQWEEEGKALRQRLQKLTGERDTLAGQTVDLQGEVDSLSKERELLQKAREELRQQLEVLEQEAWRLRRVNVELQLQGDSAQGQKEEQQEELHLAVRERERLQEMLMGLEAKQSESLSELITLREALESSHLEGELLRQEQTEVTAALARAEQSIAELSSSENTLKTEVADLRAAAVKLSALNEALALDKVGLNQQLLQLEEENQSVCSRMEAAEQARNALQVDLAEAEKRREALWEKNTHLEAQLQKAEEAGAELQADLRDIQEEKEEIQKKLSESRHQQEAATTQLEQLHQEAKRQEEVLARAVQEKEALVREKAALEVRLQAVERDRQDLAEQLQGLSSAKELLESSLFEAQQQNSVIEVTKGQLEVQIQTVTQAKEVIQGEVRCLKLELDTERSQAEQERDAAARQLAQAEQEGKTALEQQKAAHEKEVNQLREKWEKERSWHQQELAKALESLEREKMELEMRLKEQQTEMEAIQAQREEERTQAESALCQMQLETEKERVSLLETLLQTQKELADASQQLERLRQDMKVQKLKEQETTGILQTQLQEAQRELKEAARQHRDDLAALQEESSSLLQDKMDLQKQVEDLKSQLVAQDDSQRLVEQEVQEKLRETQEYNRIQKELEREKASLTLSLMEKEQRLLVLQEADSIRQQELSALRQDMQEAQGEQKELSAQMELLRQEVKEKEADFLAQEAQLLEELEASHITEQQLRASLWAQEAKAAQLQLRLRSTESQLEALAAEQQPGNQAQAQAQLASLYSALQQALGSVCESRPELSGGGDSAPSVWGLEPDQNGARSLFKRGPLLTALSAEAVASALHKLHQDLWKTQQTRDVLRDQVQKLEERLTDTEAEKSQVHTELQDLQRQLSQNQEEKSKWEGKQNSLESELMELHETMASLQSRLRRAELQRMEAQGERELLQAAKENLTAQVEHLQAAVVEARAQASAAGILEEDLRTARSALKLKNEEVESERERAQALQEQGELKVAQGKALQENLALLTQTLAEREEEVETLRGQIQELEKQREMQKAALELLSLDLKKRNQEVDLQQEQIQELEKCRSVLEHLPMAVQEREQKLTVQREQIRELEKDRETQRNVLEHQLLELEKKDQMIESQRGQVQDLKKQLVTLECLALELEENHHKMECQQKLIKELEGQRETQRVALTHLTLDLEERSQELQAQSSQIHDLESHSTVLARELQERDQEVKSQREQIEELQRQKEHLTQDLERRDQELMLQKERIQVLEDQRTRQTKILEEDLEQIKLSLRERGRELTTQRQLMQERAEEGKGPSKAQRGSLEHMKLILRDKEKEVECQQEHIHELQELKDQLEQQLQGLHRKVGETSLLLSQREQEIVVLQQQLQEAREQGELKEQSLQSQLDEAQRALAQRDQELEALQQEQQQAQGQEERVKEKADALQGALEQAHMTLKERHGELQDHKEQARRLEEELAVEGRRVQALEEVLGDLRAESREQEKALLALQQQCAEQAQEHEVETRALQDSWLQAQAVLKERDQELEALRAESQSSRHQEEAARARAEALQEALGKAHAALQGKEQHLLEQAELSRSLEASTATLQASLDACQAHSRQLEEALRIQEGEIQDQDLRYQEDVQQLQQALAQRDEELRHQQEREQLLEKSLAQRVQENMIQEKQNLGQEREEEEIRGLHQSVRELQLTLAQKEQEILELRETQQRNNLEALPHSHKTSPMEEQSLKLDSLEPRLQRELERLQAALRQTEAREIEWREKAQDLALSLAQTKASVSSLQEVAMFLQASVLERDSEQQRLQDELELTRRALEKERLHSPGATSTAELGSRGEQGVQLGEVSGVEAEPSPDGMEKQSWRQRLEHLQQAVARLEIDRSRLQRHNVQLRSTLEQVERERRKLKREAMRAAQAGSLEISKATASSPTQQDGRGQKNSDAKCVAELQKEVVLLQAQLTLERKQKQDYITRSAQTSRELAGLHHSLSHSLLAVAQAPEATVLEAETRRLDESLTQSLTSPGPVLLHPSPSTTQAASR</sequence>
<organism>
    <name type="scientific">Homo sapiens</name>
    <name type="common">Human</name>
    <dbReference type="NCBI Taxonomy" id="9606"/>
    <lineage>
        <taxon>Eukaryota</taxon>
        <taxon>Metazoa</taxon>
        <taxon>Chordata</taxon>
        <taxon>Craniata</taxon>
        <taxon>Vertebrata</taxon>
        <taxon>Euteleostomi</taxon>
        <taxon>Mammalia</taxon>
        <taxon>Eutheria</taxon>
        <taxon>Euarchontoglires</taxon>
        <taxon>Primates</taxon>
        <taxon>Haplorrhini</taxon>
        <taxon>Catarrhini</taxon>
        <taxon>Hominidae</taxon>
        <taxon>Homo</taxon>
    </lineage>
</organism>
<name>CP250_HUMAN</name>
<reference key="1">
    <citation type="journal article" date="1998" name="Arthritis Rheum.">
        <title>Autoantibodies to a group of centrosomal proteins in human autoimmune sera reactive with the centrosome.</title>
        <authorList>
            <person name="Mack G.J."/>
            <person name="Rees J."/>
            <person name="Sandblom O."/>
            <person name="Balczon R."/>
            <person name="Fritzler M.J."/>
            <person name="Rattner J.B."/>
        </authorList>
    </citation>
    <scope>NUCLEOTIDE SEQUENCE [MRNA] (ISOFORM 1)</scope>
    <scope>IDENTIFICATION AS AUTOANTIGEN IN AUTOIMMUNE DISEASES</scope>
    <source>
        <tissue>Cervix carcinoma</tissue>
    </source>
</reference>
<reference key="2">
    <citation type="journal article" date="1998" name="J. Cell Biol.">
        <title>C-Nap1, a novel centrosomal coiled-coil protein and candidate substrate of the cell cycle-regulated protein kinase Nek2.</title>
        <authorList>
            <person name="Fry A.M."/>
            <person name="Mayor T."/>
            <person name="Meraldi P."/>
            <person name="Stierhof Y.-D."/>
            <person name="Tanaka K."/>
            <person name="Nigg E.A."/>
        </authorList>
    </citation>
    <scope>NUCLEOTIDE SEQUENCE [MRNA] (ISOFORMS 1 AND 2)</scope>
    <scope>INTERACTION WITH NEK2</scope>
    <scope>SUBCELLULAR LOCATION DURING THE CELL CYCLE</scope>
    <source>
        <tissue>Placenta</tissue>
    </source>
</reference>
<reference key="3">
    <citation type="journal article" date="2001" name="Nature">
        <title>The DNA sequence and comparative analysis of human chromosome 20.</title>
        <authorList>
            <person name="Deloukas P."/>
            <person name="Matthews L.H."/>
            <person name="Ashurst J.L."/>
            <person name="Burton J."/>
            <person name="Gilbert J.G.R."/>
            <person name="Jones M."/>
            <person name="Stavrides G."/>
            <person name="Almeida J.P."/>
            <person name="Babbage A.K."/>
            <person name="Bagguley C.L."/>
            <person name="Bailey J."/>
            <person name="Barlow K.F."/>
            <person name="Bates K.N."/>
            <person name="Beard L.M."/>
            <person name="Beare D.M."/>
            <person name="Beasley O.P."/>
            <person name="Bird C.P."/>
            <person name="Blakey S.E."/>
            <person name="Bridgeman A.M."/>
            <person name="Brown A.J."/>
            <person name="Buck D."/>
            <person name="Burrill W.D."/>
            <person name="Butler A.P."/>
            <person name="Carder C."/>
            <person name="Carter N.P."/>
            <person name="Chapman J.C."/>
            <person name="Clamp M."/>
            <person name="Clark G."/>
            <person name="Clark L.N."/>
            <person name="Clark S.Y."/>
            <person name="Clee C.M."/>
            <person name="Clegg S."/>
            <person name="Cobley V.E."/>
            <person name="Collier R.E."/>
            <person name="Connor R.E."/>
            <person name="Corby N.R."/>
            <person name="Coulson A."/>
            <person name="Coville G.J."/>
            <person name="Deadman R."/>
            <person name="Dhami P.D."/>
            <person name="Dunn M."/>
            <person name="Ellington A.G."/>
            <person name="Frankland J.A."/>
            <person name="Fraser A."/>
            <person name="French L."/>
            <person name="Garner P."/>
            <person name="Grafham D.V."/>
            <person name="Griffiths C."/>
            <person name="Griffiths M.N.D."/>
            <person name="Gwilliam R."/>
            <person name="Hall R.E."/>
            <person name="Hammond S."/>
            <person name="Harley J.L."/>
            <person name="Heath P.D."/>
            <person name="Ho S."/>
            <person name="Holden J.L."/>
            <person name="Howden P.J."/>
            <person name="Huckle E."/>
            <person name="Hunt A.R."/>
            <person name="Hunt S.E."/>
            <person name="Jekosch K."/>
            <person name="Johnson C.M."/>
            <person name="Johnson D."/>
            <person name="Kay M.P."/>
            <person name="Kimberley A.M."/>
            <person name="King A."/>
            <person name="Knights A."/>
            <person name="Laird G.K."/>
            <person name="Lawlor S."/>
            <person name="Lehvaeslaiho M.H."/>
            <person name="Leversha M.A."/>
            <person name="Lloyd C."/>
            <person name="Lloyd D.M."/>
            <person name="Lovell J.D."/>
            <person name="Marsh V.L."/>
            <person name="Martin S.L."/>
            <person name="McConnachie L.J."/>
            <person name="McLay K."/>
            <person name="McMurray A.A."/>
            <person name="Milne S.A."/>
            <person name="Mistry D."/>
            <person name="Moore M.J.F."/>
            <person name="Mullikin J.C."/>
            <person name="Nickerson T."/>
            <person name="Oliver K."/>
            <person name="Parker A."/>
            <person name="Patel R."/>
            <person name="Pearce T.A.V."/>
            <person name="Peck A.I."/>
            <person name="Phillimore B.J.C.T."/>
            <person name="Prathalingam S.R."/>
            <person name="Plumb R.W."/>
            <person name="Ramsay H."/>
            <person name="Rice C.M."/>
            <person name="Ross M.T."/>
            <person name="Scott C.E."/>
            <person name="Sehra H.K."/>
            <person name="Shownkeen R."/>
            <person name="Sims S."/>
            <person name="Skuce C.D."/>
            <person name="Smith M.L."/>
            <person name="Soderlund C."/>
            <person name="Steward C.A."/>
            <person name="Sulston J.E."/>
            <person name="Swann R.M."/>
            <person name="Sycamore N."/>
            <person name="Taylor R."/>
            <person name="Tee L."/>
            <person name="Thomas D.W."/>
            <person name="Thorpe A."/>
            <person name="Tracey A."/>
            <person name="Tromans A.C."/>
            <person name="Vaudin M."/>
            <person name="Wall M."/>
            <person name="Wallis J.M."/>
            <person name="Whitehead S.L."/>
            <person name="Whittaker P."/>
            <person name="Willey D.L."/>
            <person name="Williams L."/>
            <person name="Williams S.A."/>
            <person name="Wilming L."/>
            <person name="Wray P.W."/>
            <person name="Hubbard T."/>
            <person name="Durbin R.M."/>
            <person name="Bentley D.R."/>
            <person name="Beck S."/>
            <person name="Rogers J."/>
        </authorList>
    </citation>
    <scope>NUCLEOTIDE SEQUENCE [LARGE SCALE GENOMIC DNA]</scope>
</reference>
<reference key="4">
    <citation type="submission" date="2005-09" db="EMBL/GenBank/DDBJ databases">
        <authorList>
            <person name="Mural R.J."/>
            <person name="Istrail S."/>
            <person name="Sutton G.G."/>
            <person name="Florea L."/>
            <person name="Halpern A.L."/>
            <person name="Mobarry C.M."/>
            <person name="Lippert R."/>
            <person name="Walenz B."/>
            <person name="Shatkay H."/>
            <person name="Dew I."/>
            <person name="Miller J.R."/>
            <person name="Flanigan M.J."/>
            <person name="Edwards N.J."/>
            <person name="Bolanos R."/>
            <person name="Fasulo D."/>
            <person name="Halldorsson B.V."/>
            <person name="Hannenhalli S."/>
            <person name="Turner R."/>
            <person name="Yooseph S."/>
            <person name="Lu F."/>
            <person name="Nusskern D.R."/>
            <person name="Shue B.C."/>
            <person name="Zheng X.H."/>
            <person name="Zhong F."/>
            <person name="Delcher A.L."/>
            <person name="Huson D.H."/>
            <person name="Kravitz S.A."/>
            <person name="Mouchard L."/>
            <person name="Reinert K."/>
            <person name="Remington K.A."/>
            <person name="Clark A.G."/>
            <person name="Waterman M.S."/>
            <person name="Eichler E.E."/>
            <person name="Adams M.D."/>
            <person name="Hunkapiller M.W."/>
            <person name="Myers E.W."/>
            <person name="Venter J.C."/>
        </authorList>
    </citation>
    <scope>NUCLEOTIDE SEQUENCE [LARGE SCALE GENOMIC DNA]</scope>
</reference>
<reference key="5">
    <citation type="journal article" date="2000" name="Biochem. J.">
        <title>NIMA-related kinase 2 (Nek2), a cell-cycle-regulated protein kinase localized to centrosomes, is complexed to protein phosphatase 1.</title>
        <authorList>
            <person name="Helps N.R."/>
            <person name="Luo X."/>
            <person name="Barker H.M."/>
            <person name="Cohen P.T.W."/>
        </authorList>
    </citation>
    <scope>PHOSPHORYLATION</scope>
    <scope>INTERACTION WITH NEK2 AND PPP1CA</scope>
</reference>
<reference key="6">
    <citation type="journal article" date="2002" name="J. Cell Sci.">
        <title>The mechanism regulating the dissociation of the centrosomal protein C-Nap1 from mitotic spindle poles.</title>
        <authorList>
            <person name="Mayor T."/>
            <person name="Hacker U."/>
            <person name="Stierhof Y.-D."/>
            <person name="Nigg E.A."/>
        </authorList>
    </citation>
    <scope>PHOSPHORYLATION DURING CELL CYCLE</scope>
</reference>
<reference key="7">
    <citation type="journal article" date="2003" name="Nature">
        <title>Proteomic characterization of the human centrosome by protein correlation profiling.</title>
        <authorList>
            <person name="Andersen J.S."/>
            <person name="Wilkinson C.J."/>
            <person name="Mayor T."/>
            <person name="Mortensen P."/>
            <person name="Nigg E.A."/>
            <person name="Mann M."/>
        </authorList>
    </citation>
    <scope>IDENTIFICATION BY MASS SPECTROMETRY</scope>
    <scope>SUBCELLULAR LOCATION [LARGE SCALE ANALYSIS]</scope>
    <source>
        <tissue>Lymphoblast</tissue>
    </source>
</reference>
<reference key="8">
    <citation type="journal article" date="2008" name="Exp. Cell Res.">
        <title>A novel function of CEP135 as a platform protein of C-NAP1 for its centriolar localization.</title>
        <authorList>
            <person name="Kim K."/>
            <person name="Lee S."/>
            <person name="Chang J."/>
            <person name="Rhee K."/>
        </authorList>
    </citation>
    <scope>INTERACTION WITH CEP135</scope>
</reference>
<reference key="9">
    <citation type="journal article" date="2009" name="Sci. Signal.">
        <title>Quantitative phosphoproteomic analysis of T cell receptor signaling reveals system-wide modulation of protein-protein interactions.</title>
        <authorList>
            <person name="Mayya V."/>
            <person name="Lundgren D.H."/>
            <person name="Hwang S.-I."/>
            <person name="Rezaul K."/>
            <person name="Wu L."/>
            <person name="Eng J.K."/>
            <person name="Rodionov V."/>
            <person name="Han D.K."/>
        </authorList>
    </citation>
    <scope>PHOSPHORYLATION [LARGE SCALE ANALYSIS] AT SER-2229 AND SER-2252</scope>
    <scope>IDENTIFICATION BY MASS SPECTROMETRY [LARGE SCALE ANALYSIS]</scope>
    <source>
        <tissue>Leukemic T-cell</tissue>
    </source>
</reference>
<reference key="10">
    <citation type="journal article" date="2010" name="Nat. Cell Biol.">
        <title>Components of the Hippo pathway cooperate with Nek2 kinase to regulate centrosome disjunction.</title>
        <authorList>
            <person name="Mardin B.R."/>
            <person name="Lange C."/>
            <person name="Baxter J.E."/>
            <person name="Hardy T."/>
            <person name="Scholz S.R."/>
            <person name="Fry A.M."/>
            <person name="Schiebel E."/>
        </authorList>
    </citation>
    <scope>PHOSPHORYLATION AT SER-2417 AND SER-2421</scope>
</reference>
<reference key="11">
    <citation type="journal article" date="2013" name="J. Proteome Res.">
        <title>Toward a comprehensive characterization of a human cancer cell phosphoproteome.</title>
        <authorList>
            <person name="Zhou H."/>
            <person name="Di Palma S."/>
            <person name="Preisinger C."/>
            <person name="Peng M."/>
            <person name="Polat A.N."/>
            <person name="Heck A.J."/>
            <person name="Mohammed S."/>
        </authorList>
    </citation>
    <scope>PHOSPHORYLATION [LARGE SCALE ANALYSIS] AT SER-2138; THR-2218; SER-2229 AND SER-2322</scope>
    <scope>IDENTIFICATION BY MASS SPECTROMETRY [LARGE SCALE ANALYSIS]</scope>
    <source>
        <tissue>Cervix carcinoma</tissue>
        <tissue>Erythroleukemia</tissue>
    </source>
</reference>
<reference key="12">
    <citation type="journal article" date="2014" name="J. Cell Sci.">
        <title>Centlein mediates an interaction between C-Nap1 and Cep68 to maintain centrosome cohesion.</title>
        <authorList>
            <person name="Fang G."/>
            <person name="Zhang D."/>
            <person name="Yin H."/>
            <person name="Zheng L."/>
            <person name="Bi X."/>
            <person name="Yuan L."/>
        </authorList>
    </citation>
    <scope>INTERACTION WITH CNTLN</scope>
</reference>
<reference key="13">
    <citation type="journal article" date="2015" name="Mol. Biol. Cell">
        <title>MDM1 is a microtubule-binding protein that negatively regulates centriole duplication.</title>
        <authorList>
            <person name="Van de Mark D."/>
            <person name="Kong D."/>
            <person name="Loncarek J."/>
            <person name="Stearns T."/>
        </authorList>
    </citation>
    <scope>SUBCELLULAR LOCATION</scope>
</reference>
<reference key="14">
    <citation type="journal article" date="2018" name="J. Cell Sci.">
        <title>CCDC102B functions in centrosome linker assembly and centrosome cohesion.</title>
        <authorList>
            <person name="Xia Y."/>
            <person name="Huang N."/>
            <person name="Chen Z."/>
            <person name="Li F."/>
            <person name="Fan G."/>
            <person name="Ma D."/>
            <person name="Chen J."/>
            <person name="Teng J."/>
        </authorList>
    </citation>
    <scope>FUNCTION</scope>
    <scope>INTERACTION WITH CCDC102B</scope>
    <scope>SUBCELLULAR LOCATION</scope>
</reference>
<reference key="15">
    <citation type="journal article" date="2020" name="J. Cell Sci.">
        <title>Cep44 functions in centrosome cohesion by stabilizing rootletin.</title>
        <authorList>
            <person name="Hossain D."/>
            <person name="Shih S.Y."/>
            <person name="Xiao X."/>
            <person name="White J."/>
            <person name="Tsang W.Y."/>
        </authorList>
    </citation>
    <scope>SUBCELLULAR LOCATION</scope>
</reference>
<reference key="16">
    <citation type="journal article" date="2022" name="PLoS Biol.">
        <title>cNap1 bridges centriole contact sites to maintain centrosome cohesion.</title>
        <authorList>
            <person name="Mahen R."/>
        </authorList>
    </citation>
    <scope>FUNCTION</scope>
    <scope>SUBCELLULAR LOCATION</scope>
</reference>
<reference key="17">
    <citation type="journal article" date="2014" name="J. Med. Genet.">
        <title>A homozygous nonsense CEP250 mutation combined with a heterozygous nonsense C2orf71 mutation is associated with atypical Usher syndrome.</title>
        <authorList>
            <person name="Khateb S."/>
            <person name="Zelinger L."/>
            <person name="Mizrahi-Meissonnier L."/>
            <person name="Ayuso C."/>
            <person name="Koenekoop R.K."/>
            <person name="Laxer U."/>
            <person name="Gross M."/>
            <person name="Banin E."/>
            <person name="Sharon D."/>
        </authorList>
    </citation>
    <scope>INVOLVEMENT IN CRDHL2</scope>
    <scope>VARIANT CRDHL2 1155-ARG--ARG-2442 DEL</scope>
</reference>
<reference key="18">
    <citation type="journal article" date="2016" name="PLoS ONE">
        <title>Novel candidate genes and a wide spectrum of structural and point mutations responsible for inherited retinal dystrophies revealed by exome sequencing.</title>
        <authorList>
            <person name="de Castro-Miro M."/>
            <person name="Tonda R."/>
            <person name="Escudero-Ferruz P."/>
            <person name="Andres R."/>
            <person name="Mayor-Lorenzo A."/>
            <person name="Castro J."/>
            <person name="Ciccioli M."/>
            <person name="Hidalgo D.A."/>
            <person name="Rodriguez-Ezcurra J.J."/>
            <person name="Farrando J."/>
            <person name="Perez-Santonja J.J."/>
            <person name="Cormand B."/>
            <person name="Marfany G."/>
            <person name="Gonzalez-Duarte R."/>
        </authorList>
    </citation>
    <scope>FUNCTION</scope>
    <scope>VARIANT VAL-609</scope>
    <scope>CHARACTERIZATION OF VARIANT VAL-609</scope>
</reference>
<reference key="19">
    <citation type="journal article" date="2018" name="Ophthalmic Genet.">
        <title>CEP250 mutations associated with mild cone-rod dystrophy and sensorineural hearing loss in a Japanese family.</title>
        <authorList>
            <person name="Kubota D."/>
            <person name="Gocho K."/>
            <person name="Kikuchi S."/>
            <person name="Akeo K."/>
            <person name="Miura M."/>
            <person name="Yamaki K."/>
            <person name="Takahashi H."/>
            <person name="Kameya S."/>
        </authorList>
    </citation>
    <scope>INVOLVEMENT IN CRDHL2</scope>
    <scope>VARIANTS CRDHL2 121-ARG--ARG-2442 DEL AND 188-ARG--ARG-2442 DEL</scope>
</reference>
<reference key="20">
    <citation type="journal article" date="2018" name="Sci. Rep.">
        <title>High-throughput sequencing for the molecular diagnosis of Usher syndrome reveals 42 novel mutations and consolidates CEP250 as Usher-like disease causative.</title>
        <authorList>
            <person name="Fuster-Garcia C."/>
            <person name="Garcia-Garcia G."/>
            <person name="Jaijo T."/>
            <person name="Fornes N."/>
            <person name="Ayuso C."/>
            <person name="Fernandez-Burriel M."/>
            <person name="Sanchez-De la Morena A."/>
            <person name="Aller E."/>
            <person name="Millan J.M."/>
        </authorList>
    </citation>
    <scope>VARIANTS CRDHL2 1113-LYS--ARG-2442 DEL AND 1336-ARG--ARG-2442 DEL</scope>
</reference>
<reference key="21">
    <citation type="journal article" date="2019" name="Hum. Mutat.">
        <title>Functional characterization of CEP250 variant identified in nonsyndromic retinitis pigmentosa.</title>
        <authorList>
            <person name="Huang X.F."/>
            <person name="Xiang L."/>
            <person name="Fang X.L."/>
            <person name="Liu W.Q."/>
            <person name="Zhuang Y.Y."/>
            <person name="Chen Z.J."/>
            <person name="Shen R.J."/>
            <person name="Cheng W."/>
            <person name="Han R.Y."/>
            <person name="Zheng S.S."/>
            <person name="Chen X.J."/>
            <person name="Liu X."/>
            <person name="Jin Z.B."/>
        </authorList>
    </citation>
    <scope>VARIANT CRDHL2 188-ARG--ARG-2442 DEL</scope>
</reference>
<accession>Q9BV73</accession>
<accession>E1P5Q3</accession>
<accession>O14812</accession>
<accession>O60588</accession>
<accession>Q9H450</accession>
<protein>
    <recommendedName>
        <fullName>Centrosome-associated protein CEP250</fullName>
    </recommendedName>
    <alternativeName>
        <fullName>250 kDa centrosomal protein</fullName>
        <shortName>Cep250</shortName>
    </alternativeName>
    <alternativeName>
        <fullName>Centrosomal Nek2-associated protein 1</fullName>
        <shortName>C-Nap1</shortName>
    </alternativeName>
    <alternativeName>
        <fullName>Centrosomal protein 2</fullName>
    </alternativeName>
</protein>